<keyword id="KW-0030">Aminoacyl-tRNA synthetase</keyword>
<keyword id="KW-0067">ATP-binding</keyword>
<keyword id="KW-0963">Cytoplasm</keyword>
<keyword id="KW-0436">Ligase</keyword>
<keyword id="KW-0460">Magnesium</keyword>
<keyword id="KW-0479">Metal-binding</keyword>
<keyword id="KW-0547">Nucleotide-binding</keyword>
<keyword id="KW-0648">Protein biosynthesis</keyword>
<keyword id="KW-0694">RNA-binding</keyword>
<keyword id="KW-0820">tRNA-binding</keyword>
<proteinExistence type="inferred from homology"/>
<feature type="chain" id="PRO_0000232044" description="Phenylalanine--tRNA ligase beta subunit">
    <location>
        <begin position="1"/>
        <end position="810"/>
    </location>
</feature>
<feature type="domain" description="tRNA-binding" evidence="1">
    <location>
        <begin position="39"/>
        <end position="150"/>
    </location>
</feature>
<feature type="domain" description="B5" evidence="1">
    <location>
        <begin position="411"/>
        <end position="495"/>
    </location>
</feature>
<feature type="domain" description="FDX-ACB" evidence="1">
    <location>
        <begin position="716"/>
        <end position="809"/>
    </location>
</feature>
<feature type="binding site" evidence="1">
    <location>
        <position position="473"/>
    </location>
    <ligand>
        <name>Mg(2+)</name>
        <dbReference type="ChEBI" id="CHEBI:18420"/>
        <note>shared with alpha subunit</note>
    </ligand>
</feature>
<feature type="binding site" evidence="1">
    <location>
        <position position="479"/>
    </location>
    <ligand>
        <name>Mg(2+)</name>
        <dbReference type="ChEBI" id="CHEBI:18420"/>
        <note>shared with alpha subunit</note>
    </ligand>
</feature>
<feature type="binding site" evidence="1">
    <location>
        <position position="482"/>
    </location>
    <ligand>
        <name>Mg(2+)</name>
        <dbReference type="ChEBI" id="CHEBI:18420"/>
        <note>shared with alpha subunit</note>
    </ligand>
</feature>
<feature type="binding site" evidence="1">
    <location>
        <position position="483"/>
    </location>
    <ligand>
        <name>Mg(2+)</name>
        <dbReference type="ChEBI" id="CHEBI:18420"/>
        <note>shared with alpha subunit</note>
    </ligand>
</feature>
<dbReference type="EC" id="6.1.1.20" evidence="1"/>
<dbReference type="EMBL" id="CP000117">
    <property type="protein sequence ID" value="ABA21839.1"/>
    <property type="molecule type" value="Genomic_DNA"/>
</dbReference>
<dbReference type="SMR" id="Q3MAZ7"/>
<dbReference type="STRING" id="240292.Ava_2221"/>
<dbReference type="KEGG" id="ava:Ava_2221"/>
<dbReference type="eggNOG" id="COG0072">
    <property type="taxonomic scope" value="Bacteria"/>
</dbReference>
<dbReference type="eggNOG" id="COG0073">
    <property type="taxonomic scope" value="Bacteria"/>
</dbReference>
<dbReference type="HOGENOM" id="CLU_016891_0_0_3"/>
<dbReference type="Proteomes" id="UP000002533">
    <property type="component" value="Chromosome"/>
</dbReference>
<dbReference type="GO" id="GO:0009328">
    <property type="term" value="C:phenylalanine-tRNA ligase complex"/>
    <property type="evidence" value="ECO:0007669"/>
    <property type="project" value="TreeGrafter"/>
</dbReference>
<dbReference type="GO" id="GO:0005524">
    <property type="term" value="F:ATP binding"/>
    <property type="evidence" value="ECO:0007669"/>
    <property type="project" value="UniProtKB-UniRule"/>
</dbReference>
<dbReference type="GO" id="GO:0000287">
    <property type="term" value="F:magnesium ion binding"/>
    <property type="evidence" value="ECO:0007669"/>
    <property type="project" value="UniProtKB-UniRule"/>
</dbReference>
<dbReference type="GO" id="GO:0004826">
    <property type="term" value="F:phenylalanine-tRNA ligase activity"/>
    <property type="evidence" value="ECO:0007669"/>
    <property type="project" value="UniProtKB-UniRule"/>
</dbReference>
<dbReference type="GO" id="GO:0000049">
    <property type="term" value="F:tRNA binding"/>
    <property type="evidence" value="ECO:0007669"/>
    <property type="project" value="UniProtKB-KW"/>
</dbReference>
<dbReference type="GO" id="GO:0006432">
    <property type="term" value="P:phenylalanyl-tRNA aminoacylation"/>
    <property type="evidence" value="ECO:0007669"/>
    <property type="project" value="UniProtKB-UniRule"/>
</dbReference>
<dbReference type="CDD" id="cd00769">
    <property type="entry name" value="PheRS_beta_core"/>
    <property type="match status" value="1"/>
</dbReference>
<dbReference type="CDD" id="cd02796">
    <property type="entry name" value="tRNA_bind_bactPheRS"/>
    <property type="match status" value="1"/>
</dbReference>
<dbReference type="FunFam" id="2.40.50.140:FF:000045">
    <property type="entry name" value="Phenylalanine--tRNA ligase beta subunit"/>
    <property type="match status" value="1"/>
</dbReference>
<dbReference type="FunFam" id="3.30.70.380:FF:000001">
    <property type="entry name" value="Phenylalanine--tRNA ligase beta subunit"/>
    <property type="match status" value="1"/>
</dbReference>
<dbReference type="FunFam" id="3.50.40.10:FF:000001">
    <property type="entry name" value="Phenylalanine--tRNA ligase beta subunit"/>
    <property type="match status" value="1"/>
</dbReference>
<dbReference type="Gene3D" id="3.30.56.10">
    <property type="match status" value="2"/>
</dbReference>
<dbReference type="Gene3D" id="3.30.930.10">
    <property type="entry name" value="Bira Bifunctional Protein, Domain 2"/>
    <property type="match status" value="1"/>
</dbReference>
<dbReference type="Gene3D" id="3.30.70.380">
    <property type="entry name" value="Ferrodoxin-fold anticodon-binding domain"/>
    <property type="match status" value="1"/>
</dbReference>
<dbReference type="Gene3D" id="2.40.50.140">
    <property type="entry name" value="Nucleic acid-binding proteins"/>
    <property type="match status" value="1"/>
</dbReference>
<dbReference type="Gene3D" id="3.50.40.10">
    <property type="entry name" value="Phenylalanyl-trna Synthetase, Chain B, domain 3"/>
    <property type="match status" value="1"/>
</dbReference>
<dbReference type="HAMAP" id="MF_00283">
    <property type="entry name" value="Phe_tRNA_synth_beta1"/>
    <property type="match status" value="1"/>
</dbReference>
<dbReference type="InterPro" id="IPR045864">
    <property type="entry name" value="aa-tRNA-synth_II/BPL/LPL"/>
</dbReference>
<dbReference type="InterPro" id="IPR005146">
    <property type="entry name" value="B3/B4_tRNA-bd"/>
</dbReference>
<dbReference type="InterPro" id="IPR009061">
    <property type="entry name" value="DNA-bd_dom_put_sf"/>
</dbReference>
<dbReference type="InterPro" id="IPR005121">
    <property type="entry name" value="Fdx_antiC-bd"/>
</dbReference>
<dbReference type="InterPro" id="IPR036690">
    <property type="entry name" value="Fdx_antiC-bd_sf"/>
</dbReference>
<dbReference type="InterPro" id="IPR012340">
    <property type="entry name" value="NA-bd_OB-fold"/>
</dbReference>
<dbReference type="InterPro" id="IPR045060">
    <property type="entry name" value="Phe-tRNA-ligase_IIc_bsu"/>
</dbReference>
<dbReference type="InterPro" id="IPR004532">
    <property type="entry name" value="Phe-tRNA-ligase_IIc_bsu_bact"/>
</dbReference>
<dbReference type="InterPro" id="IPR020825">
    <property type="entry name" value="Phe-tRNA_synthase-like_B3/B4"/>
</dbReference>
<dbReference type="InterPro" id="IPR041616">
    <property type="entry name" value="PheRS_beta_core"/>
</dbReference>
<dbReference type="InterPro" id="IPR002547">
    <property type="entry name" value="tRNA-bd_dom"/>
</dbReference>
<dbReference type="InterPro" id="IPR033714">
    <property type="entry name" value="tRNA_bind_bactPheRS"/>
</dbReference>
<dbReference type="InterPro" id="IPR005147">
    <property type="entry name" value="tRNA_synthase_B5-dom"/>
</dbReference>
<dbReference type="NCBIfam" id="TIGR00472">
    <property type="entry name" value="pheT_bact"/>
    <property type="match status" value="1"/>
</dbReference>
<dbReference type="NCBIfam" id="NF045760">
    <property type="entry name" value="YtpR"/>
    <property type="match status" value="1"/>
</dbReference>
<dbReference type="PANTHER" id="PTHR10947:SF0">
    <property type="entry name" value="PHENYLALANINE--TRNA LIGASE BETA SUBUNIT"/>
    <property type="match status" value="1"/>
</dbReference>
<dbReference type="PANTHER" id="PTHR10947">
    <property type="entry name" value="PHENYLALANYL-TRNA SYNTHETASE BETA CHAIN AND LEUCINE-RICH REPEAT-CONTAINING PROTEIN 47"/>
    <property type="match status" value="1"/>
</dbReference>
<dbReference type="Pfam" id="PF03483">
    <property type="entry name" value="B3_4"/>
    <property type="match status" value="1"/>
</dbReference>
<dbReference type="Pfam" id="PF03484">
    <property type="entry name" value="B5"/>
    <property type="match status" value="1"/>
</dbReference>
<dbReference type="Pfam" id="PF03147">
    <property type="entry name" value="FDX-ACB"/>
    <property type="match status" value="1"/>
</dbReference>
<dbReference type="Pfam" id="PF01588">
    <property type="entry name" value="tRNA_bind"/>
    <property type="match status" value="1"/>
</dbReference>
<dbReference type="Pfam" id="PF17759">
    <property type="entry name" value="tRNA_synthFbeta"/>
    <property type="match status" value="1"/>
</dbReference>
<dbReference type="SMART" id="SM00873">
    <property type="entry name" value="B3_4"/>
    <property type="match status" value="1"/>
</dbReference>
<dbReference type="SMART" id="SM00874">
    <property type="entry name" value="B5"/>
    <property type="match status" value="1"/>
</dbReference>
<dbReference type="SMART" id="SM00896">
    <property type="entry name" value="FDX-ACB"/>
    <property type="match status" value="1"/>
</dbReference>
<dbReference type="SUPFAM" id="SSF54991">
    <property type="entry name" value="Anticodon-binding domain of PheRS"/>
    <property type="match status" value="1"/>
</dbReference>
<dbReference type="SUPFAM" id="SSF55681">
    <property type="entry name" value="Class II aaRS and biotin synthetases"/>
    <property type="match status" value="1"/>
</dbReference>
<dbReference type="SUPFAM" id="SSF50249">
    <property type="entry name" value="Nucleic acid-binding proteins"/>
    <property type="match status" value="1"/>
</dbReference>
<dbReference type="SUPFAM" id="SSF56037">
    <property type="entry name" value="PheT/TilS domain"/>
    <property type="match status" value="1"/>
</dbReference>
<dbReference type="SUPFAM" id="SSF46955">
    <property type="entry name" value="Putative DNA-binding domain"/>
    <property type="match status" value="1"/>
</dbReference>
<dbReference type="PROSITE" id="PS51483">
    <property type="entry name" value="B5"/>
    <property type="match status" value="1"/>
</dbReference>
<dbReference type="PROSITE" id="PS51447">
    <property type="entry name" value="FDX_ACB"/>
    <property type="match status" value="1"/>
</dbReference>
<dbReference type="PROSITE" id="PS50886">
    <property type="entry name" value="TRBD"/>
    <property type="match status" value="1"/>
</dbReference>
<gene>
    <name evidence="1" type="primary">pheT</name>
    <name type="ordered locus">Ava_2221</name>
</gene>
<evidence type="ECO:0000255" key="1">
    <source>
        <dbReference type="HAMAP-Rule" id="MF_00283"/>
    </source>
</evidence>
<reference key="1">
    <citation type="journal article" date="2014" name="Stand. Genomic Sci.">
        <title>Complete genome sequence of Anabaena variabilis ATCC 29413.</title>
        <authorList>
            <person name="Thiel T."/>
            <person name="Pratte B.S."/>
            <person name="Zhong J."/>
            <person name="Goodwin L."/>
            <person name="Copeland A."/>
            <person name="Lucas S."/>
            <person name="Han C."/>
            <person name="Pitluck S."/>
            <person name="Land M.L."/>
            <person name="Kyrpides N.C."/>
            <person name="Woyke T."/>
        </authorList>
    </citation>
    <scope>NUCLEOTIDE SEQUENCE [LARGE SCALE GENOMIC DNA]</scope>
    <source>
        <strain>ATCC 29413 / PCC 7937</strain>
    </source>
</reference>
<name>SYFB_TRIV2</name>
<organism>
    <name type="scientific">Trichormus variabilis (strain ATCC 29413 / PCC 7937)</name>
    <name type="common">Anabaena variabilis</name>
    <dbReference type="NCBI Taxonomy" id="240292"/>
    <lineage>
        <taxon>Bacteria</taxon>
        <taxon>Bacillati</taxon>
        <taxon>Cyanobacteriota</taxon>
        <taxon>Cyanophyceae</taxon>
        <taxon>Nostocales</taxon>
        <taxon>Nostocaceae</taxon>
        <taxon>Trichormus</taxon>
    </lineage>
</organism>
<protein>
    <recommendedName>
        <fullName evidence="1">Phenylalanine--tRNA ligase beta subunit</fullName>
        <ecNumber evidence="1">6.1.1.20</ecNumber>
    </recommendedName>
    <alternativeName>
        <fullName evidence="1">Phenylalanyl-tRNA synthetase beta subunit</fullName>
        <shortName evidence="1">PheRS</shortName>
    </alternativeName>
</protein>
<sequence length="810" mass="89323">MRISLNWLRELVEIKLSPEELAHILTMAGFEVEDIEDRRTWANGVVVGRVLERQPHPNADKLSVCQVDVGATETLNIVCGAPNVRADIYVPVATVGAYLPNIDLKIKPAKLRGVPSQGMICSLKELGLPSEVDGIYIFPQENLPLGSDVRPLLGLDDVILDVTATANRADALSMVGIAREVAALTDAKLSIPKPGEAFVSESVGKLGLKIADTQACPAYIGTVIEQVKIASSPEWLQQRLRSAGVRPISNVVDITNYVLLEWGQPLHAFDQERLKSVANADNLTIGVRCANQGETLKTLDGQTRNLTTQNLLITANDQPVALAGVMGGEETEVHEGTQSLILEAALFDSVAIRRSSRSVGLRSEASGRYERGVNRAELEIANRRALSLISELADGVIVHQEIADTRPDPTTWSRSIFLRLDRVNEVLGPINVGETGELEAKDVERTLTALGCELTPAGEGTWNVSVPPYRYRDLEREIDLIEEVARLYGYDNFCDTLPDKAEAGYLPVDQELVRKLRAALRAEGLTELIHYSLVKPGEDRQIVLSNPLFVEYSALRTDLLAGLIDAFQYNLEQGNGSLNGFEIGRIFWQEEDGLQEKDAIAGIIGGDTSLGKWSKGSKDQPLTWFEAKGILESVFQQLGILVEYQPDCRDERLHPGRTASLWIGGNRLGIFGQLHPQLRRDKDLPESVYVFQLDLDVLLDALDKDEILVPAFKPYSTYPASDRDIAFFAPVKISVSEIEKAINKAGKGLLESVELFDEYRGENVPQGQRSLAFRLVYRASDRTLTDTEVEPVHNKVREALVEKFGVNLRS</sequence>
<accession>Q3MAZ7</accession>
<comment type="catalytic activity">
    <reaction evidence="1">
        <text>tRNA(Phe) + L-phenylalanine + ATP = L-phenylalanyl-tRNA(Phe) + AMP + diphosphate + H(+)</text>
        <dbReference type="Rhea" id="RHEA:19413"/>
        <dbReference type="Rhea" id="RHEA-COMP:9668"/>
        <dbReference type="Rhea" id="RHEA-COMP:9699"/>
        <dbReference type="ChEBI" id="CHEBI:15378"/>
        <dbReference type="ChEBI" id="CHEBI:30616"/>
        <dbReference type="ChEBI" id="CHEBI:33019"/>
        <dbReference type="ChEBI" id="CHEBI:58095"/>
        <dbReference type="ChEBI" id="CHEBI:78442"/>
        <dbReference type="ChEBI" id="CHEBI:78531"/>
        <dbReference type="ChEBI" id="CHEBI:456215"/>
        <dbReference type="EC" id="6.1.1.20"/>
    </reaction>
</comment>
<comment type="cofactor">
    <cofactor evidence="1">
        <name>Mg(2+)</name>
        <dbReference type="ChEBI" id="CHEBI:18420"/>
    </cofactor>
    <text evidence="1">Binds 2 magnesium ions per tetramer.</text>
</comment>
<comment type="subunit">
    <text evidence="1">Tetramer of two alpha and two beta subunits.</text>
</comment>
<comment type="subcellular location">
    <subcellularLocation>
        <location evidence="1">Cytoplasm</location>
    </subcellularLocation>
</comment>
<comment type="similarity">
    <text evidence="1">Belongs to the phenylalanyl-tRNA synthetase beta subunit family. Type 1 subfamily.</text>
</comment>